<keyword id="KW-0963">Cytoplasm</keyword>
<keyword id="KW-0274">FAD</keyword>
<keyword id="KW-0285">Flavoprotein</keyword>
<keyword id="KW-0489">Methyltransferase</keyword>
<keyword id="KW-0520">NAD</keyword>
<keyword id="KW-0521">NADP</keyword>
<keyword id="KW-1185">Reference proteome</keyword>
<keyword id="KW-0808">Transferase</keyword>
<keyword id="KW-0819">tRNA processing</keyword>
<evidence type="ECO:0000255" key="1">
    <source>
        <dbReference type="HAMAP-Rule" id="MF_01037"/>
    </source>
</evidence>
<gene>
    <name evidence="1" type="primary">trmFO</name>
    <name type="ordered locus">Nther_1382</name>
</gene>
<protein>
    <recommendedName>
        <fullName evidence="1">Methylenetetrahydrofolate--tRNA-(uracil-5-)-methyltransferase TrmFO</fullName>
        <ecNumber evidence="1">2.1.1.74</ecNumber>
    </recommendedName>
    <alternativeName>
        <fullName evidence="1">Folate-dependent tRNA (uracil-5-)-methyltransferase</fullName>
    </alternativeName>
    <alternativeName>
        <fullName evidence="1">Folate-dependent tRNA(M-5-U54)-methyltransferase</fullName>
    </alternativeName>
</protein>
<proteinExistence type="inferred from homology"/>
<reference key="1">
    <citation type="submission" date="2008-04" db="EMBL/GenBank/DDBJ databases">
        <title>Complete sequence of chromosome of Natranaerobius thermophilus JW/NM-WN-LF.</title>
        <authorList>
            <consortium name="US DOE Joint Genome Institute"/>
            <person name="Copeland A."/>
            <person name="Lucas S."/>
            <person name="Lapidus A."/>
            <person name="Glavina del Rio T."/>
            <person name="Dalin E."/>
            <person name="Tice H."/>
            <person name="Bruce D."/>
            <person name="Goodwin L."/>
            <person name="Pitluck S."/>
            <person name="Chertkov O."/>
            <person name="Brettin T."/>
            <person name="Detter J.C."/>
            <person name="Han C."/>
            <person name="Kuske C.R."/>
            <person name="Schmutz J."/>
            <person name="Larimer F."/>
            <person name="Land M."/>
            <person name="Hauser L."/>
            <person name="Kyrpides N."/>
            <person name="Lykidis A."/>
            <person name="Mesbah N.M."/>
            <person name="Wiegel J."/>
        </authorList>
    </citation>
    <scope>NUCLEOTIDE SEQUENCE [LARGE SCALE GENOMIC DNA]</scope>
    <source>
        <strain>ATCC BAA-1301 / DSM 18059 / JW/NM-WN-LF</strain>
    </source>
</reference>
<comment type="function">
    <text evidence="1">Catalyzes the folate-dependent formation of 5-methyl-uridine at position 54 (M-5-U54) in all tRNAs.</text>
</comment>
<comment type="catalytic activity">
    <reaction evidence="1">
        <text>uridine(54) in tRNA + (6R)-5,10-methylene-5,6,7,8-tetrahydrofolate + NADH + H(+) = 5-methyluridine(54) in tRNA + (6S)-5,6,7,8-tetrahydrofolate + NAD(+)</text>
        <dbReference type="Rhea" id="RHEA:16873"/>
        <dbReference type="Rhea" id="RHEA-COMP:10167"/>
        <dbReference type="Rhea" id="RHEA-COMP:10193"/>
        <dbReference type="ChEBI" id="CHEBI:15378"/>
        <dbReference type="ChEBI" id="CHEBI:15636"/>
        <dbReference type="ChEBI" id="CHEBI:57453"/>
        <dbReference type="ChEBI" id="CHEBI:57540"/>
        <dbReference type="ChEBI" id="CHEBI:57945"/>
        <dbReference type="ChEBI" id="CHEBI:65315"/>
        <dbReference type="ChEBI" id="CHEBI:74447"/>
        <dbReference type="EC" id="2.1.1.74"/>
    </reaction>
</comment>
<comment type="catalytic activity">
    <reaction evidence="1">
        <text>uridine(54) in tRNA + (6R)-5,10-methylene-5,6,7,8-tetrahydrofolate + NADPH + H(+) = 5-methyluridine(54) in tRNA + (6S)-5,6,7,8-tetrahydrofolate + NADP(+)</text>
        <dbReference type="Rhea" id="RHEA:62372"/>
        <dbReference type="Rhea" id="RHEA-COMP:10167"/>
        <dbReference type="Rhea" id="RHEA-COMP:10193"/>
        <dbReference type="ChEBI" id="CHEBI:15378"/>
        <dbReference type="ChEBI" id="CHEBI:15636"/>
        <dbReference type="ChEBI" id="CHEBI:57453"/>
        <dbReference type="ChEBI" id="CHEBI:57783"/>
        <dbReference type="ChEBI" id="CHEBI:58349"/>
        <dbReference type="ChEBI" id="CHEBI:65315"/>
        <dbReference type="ChEBI" id="CHEBI:74447"/>
        <dbReference type="EC" id="2.1.1.74"/>
    </reaction>
</comment>
<comment type="cofactor">
    <cofactor evidence="1">
        <name>FAD</name>
        <dbReference type="ChEBI" id="CHEBI:57692"/>
    </cofactor>
</comment>
<comment type="subcellular location">
    <subcellularLocation>
        <location evidence="1">Cytoplasm</location>
    </subcellularLocation>
</comment>
<comment type="similarity">
    <text evidence="1">Belongs to the MnmG family. TrmFO subfamily.</text>
</comment>
<dbReference type="EC" id="2.1.1.74" evidence="1"/>
<dbReference type="EMBL" id="CP001034">
    <property type="protein sequence ID" value="ACB84965.1"/>
    <property type="molecule type" value="Genomic_DNA"/>
</dbReference>
<dbReference type="RefSeq" id="WP_012447840.1">
    <property type="nucleotide sequence ID" value="NC_010718.1"/>
</dbReference>
<dbReference type="SMR" id="B2A334"/>
<dbReference type="FunCoup" id="B2A334">
    <property type="interactions" value="13"/>
</dbReference>
<dbReference type="STRING" id="457570.Nther_1382"/>
<dbReference type="KEGG" id="nth:Nther_1382"/>
<dbReference type="eggNOG" id="COG1206">
    <property type="taxonomic scope" value="Bacteria"/>
</dbReference>
<dbReference type="HOGENOM" id="CLU_033057_1_0_9"/>
<dbReference type="InParanoid" id="B2A334"/>
<dbReference type="OrthoDB" id="9803114at2"/>
<dbReference type="Proteomes" id="UP000001683">
    <property type="component" value="Chromosome"/>
</dbReference>
<dbReference type="GO" id="GO:0005829">
    <property type="term" value="C:cytosol"/>
    <property type="evidence" value="ECO:0007669"/>
    <property type="project" value="TreeGrafter"/>
</dbReference>
<dbReference type="GO" id="GO:0050660">
    <property type="term" value="F:flavin adenine dinucleotide binding"/>
    <property type="evidence" value="ECO:0007669"/>
    <property type="project" value="UniProtKB-UniRule"/>
</dbReference>
<dbReference type="GO" id="GO:0047151">
    <property type="term" value="F:tRNA (uracil(54)-C5)-methyltransferase activity, 5,10-methylenetetrahydrofolate-dependent"/>
    <property type="evidence" value="ECO:0007669"/>
    <property type="project" value="UniProtKB-UniRule"/>
</dbReference>
<dbReference type="GO" id="GO:0030488">
    <property type="term" value="P:tRNA methylation"/>
    <property type="evidence" value="ECO:0007669"/>
    <property type="project" value="TreeGrafter"/>
</dbReference>
<dbReference type="GO" id="GO:0002098">
    <property type="term" value="P:tRNA wobble uridine modification"/>
    <property type="evidence" value="ECO:0007669"/>
    <property type="project" value="TreeGrafter"/>
</dbReference>
<dbReference type="FunFam" id="3.50.50.60:FF:000035">
    <property type="entry name" value="Methylenetetrahydrofolate--tRNA-(uracil-5-)-methyltransferase TrmFO"/>
    <property type="match status" value="1"/>
</dbReference>
<dbReference type="Gene3D" id="3.50.50.60">
    <property type="entry name" value="FAD/NAD(P)-binding domain"/>
    <property type="match status" value="2"/>
</dbReference>
<dbReference type="HAMAP" id="MF_01037">
    <property type="entry name" value="TrmFO"/>
    <property type="match status" value="1"/>
</dbReference>
<dbReference type="InterPro" id="IPR036188">
    <property type="entry name" value="FAD/NAD-bd_sf"/>
</dbReference>
<dbReference type="InterPro" id="IPR002218">
    <property type="entry name" value="MnmG-rel"/>
</dbReference>
<dbReference type="InterPro" id="IPR040131">
    <property type="entry name" value="MnmG_N"/>
</dbReference>
<dbReference type="InterPro" id="IPR004417">
    <property type="entry name" value="TrmFO"/>
</dbReference>
<dbReference type="NCBIfam" id="TIGR00137">
    <property type="entry name" value="gid_trmFO"/>
    <property type="match status" value="1"/>
</dbReference>
<dbReference type="NCBIfam" id="NF003739">
    <property type="entry name" value="PRK05335.1"/>
    <property type="match status" value="1"/>
</dbReference>
<dbReference type="PANTHER" id="PTHR11806">
    <property type="entry name" value="GLUCOSE INHIBITED DIVISION PROTEIN A"/>
    <property type="match status" value="1"/>
</dbReference>
<dbReference type="PANTHER" id="PTHR11806:SF2">
    <property type="entry name" value="METHYLENETETRAHYDROFOLATE--TRNA-(URACIL-5-)-METHYLTRANSFERASE TRMFO"/>
    <property type="match status" value="1"/>
</dbReference>
<dbReference type="Pfam" id="PF01134">
    <property type="entry name" value="GIDA"/>
    <property type="match status" value="1"/>
</dbReference>
<dbReference type="PRINTS" id="PR00411">
    <property type="entry name" value="PNDRDTASEI"/>
</dbReference>
<dbReference type="SUPFAM" id="SSF51905">
    <property type="entry name" value="FAD/NAD(P)-binding domain"/>
    <property type="match status" value="1"/>
</dbReference>
<sequence length="433" mass="48280">MRLTVIGGGLAGSEAAYQAAQQGVTVDLYEMRPVKTTAAHKTGELAELVCSNSLRAKSLENAAGLLKEELRKFDSLIMKVADQVQVPAGGALAVDREAFSQKVTEYIENHPNINLITEEVTEINESQPTVIATGPLTSTSLTERIQKLTGTDFLYFYDAAAPIVTYESINKNIAYWASRYGKGTPDYLNCPMTKEEYEDFYQELINAEKVPLKSFEKEVVFEGCMPVEQMANRGKDTLVFGPLKPVGLENPNTGEMPYAVVQLRKDNREGTLYNLVGFQTRLKWPEQRRVFRKIPGLEEAEFVRYGVMHRNTFINSPKVLTANYQLRERPGLFFAGQVTGVEGYVESTASGLVAGLNAARKLQGNETLTFPRETALGALASYIVEASPDNFQPMNINFGLLPSLEKKVPKKIKKQKQSERALKILEEFIERKL</sequence>
<organism>
    <name type="scientific">Natranaerobius thermophilus (strain ATCC BAA-1301 / DSM 18059 / JW/NM-WN-LF)</name>
    <dbReference type="NCBI Taxonomy" id="457570"/>
    <lineage>
        <taxon>Bacteria</taxon>
        <taxon>Bacillati</taxon>
        <taxon>Bacillota</taxon>
        <taxon>Clostridia</taxon>
        <taxon>Natranaerobiales</taxon>
        <taxon>Natranaerobiaceae</taxon>
        <taxon>Natranaerobius</taxon>
    </lineage>
</organism>
<name>TRMFO_NATTJ</name>
<feature type="chain" id="PRO_0000346366" description="Methylenetetrahydrofolate--tRNA-(uracil-5-)-methyltransferase TrmFO">
    <location>
        <begin position="1"/>
        <end position="433"/>
    </location>
</feature>
<feature type="binding site" evidence="1">
    <location>
        <begin position="7"/>
        <end position="12"/>
    </location>
    <ligand>
        <name>FAD</name>
        <dbReference type="ChEBI" id="CHEBI:57692"/>
    </ligand>
</feature>
<accession>B2A334</accession>